<accession>Q1IG62</accession>
<organism>
    <name type="scientific">Pseudomonas entomophila (strain L48)</name>
    <dbReference type="NCBI Taxonomy" id="384676"/>
    <lineage>
        <taxon>Bacteria</taxon>
        <taxon>Pseudomonadati</taxon>
        <taxon>Pseudomonadota</taxon>
        <taxon>Gammaproteobacteria</taxon>
        <taxon>Pseudomonadales</taxon>
        <taxon>Pseudomonadaceae</taxon>
        <taxon>Pseudomonas</taxon>
    </lineage>
</organism>
<reference key="1">
    <citation type="journal article" date="2006" name="Nat. Biotechnol.">
        <title>Complete genome sequence of the entomopathogenic and metabolically versatile soil bacterium Pseudomonas entomophila.</title>
        <authorList>
            <person name="Vodovar N."/>
            <person name="Vallenet D."/>
            <person name="Cruveiller S."/>
            <person name="Rouy Z."/>
            <person name="Barbe V."/>
            <person name="Acosta C."/>
            <person name="Cattolico L."/>
            <person name="Jubin C."/>
            <person name="Lajus A."/>
            <person name="Segurens B."/>
            <person name="Vacherie B."/>
            <person name="Wincker P."/>
            <person name="Weissenbach J."/>
            <person name="Lemaitre B."/>
            <person name="Medigue C."/>
            <person name="Boccard F."/>
        </authorList>
    </citation>
    <scope>NUCLEOTIDE SEQUENCE [LARGE SCALE GENOMIC DNA]</scope>
    <source>
        <strain>L48</strain>
    </source>
</reference>
<comment type="function">
    <text evidence="1">Catalyzes the interconversion of 2-phosphoglycerate and 3-phosphoglycerate.</text>
</comment>
<comment type="catalytic activity">
    <reaction evidence="1">
        <text>(2R)-2-phosphoglycerate = (2R)-3-phosphoglycerate</text>
        <dbReference type="Rhea" id="RHEA:15901"/>
        <dbReference type="ChEBI" id="CHEBI:58272"/>
        <dbReference type="ChEBI" id="CHEBI:58289"/>
        <dbReference type="EC" id="5.4.2.12"/>
    </reaction>
</comment>
<comment type="cofactor">
    <cofactor evidence="1">
        <name>Mn(2+)</name>
        <dbReference type="ChEBI" id="CHEBI:29035"/>
    </cofactor>
    <text evidence="1">Binds 2 manganese ions per subunit.</text>
</comment>
<comment type="pathway">
    <text evidence="1">Carbohydrate degradation; glycolysis; pyruvate from D-glyceraldehyde 3-phosphate: step 3/5.</text>
</comment>
<comment type="subunit">
    <text evidence="1">Monomer.</text>
</comment>
<comment type="similarity">
    <text evidence="1">Belongs to the BPG-independent phosphoglycerate mutase family.</text>
</comment>
<name>GPMI_PSEE4</name>
<protein>
    <recommendedName>
        <fullName evidence="1">2,3-bisphosphoglycerate-independent phosphoglycerate mutase</fullName>
        <shortName evidence="1">BPG-independent PGAM</shortName>
        <shortName evidence="1">Phosphoglyceromutase</shortName>
        <shortName evidence="1">iPGM</shortName>
        <ecNumber evidence="1">5.4.2.12</ecNumber>
    </recommendedName>
</protein>
<evidence type="ECO:0000255" key="1">
    <source>
        <dbReference type="HAMAP-Rule" id="MF_01038"/>
    </source>
</evidence>
<proteinExistence type="inferred from homology"/>
<gene>
    <name evidence="1" type="primary">gpmI</name>
    <name type="ordered locus">PSEEN0380</name>
</gene>
<keyword id="KW-0324">Glycolysis</keyword>
<keyword id="KW-0413">Isomerase</keyword>
<keyword id="KW-0464">Manganese</keyword>
<keyword id="KW-0479">Metal-binding</keyword>
<dbReference type="EC" id="5.4.2.12" evidence="1"/>
<dbReference type="EMBL" id="CT573326">
    <property type="protein sequence ID" value="CAK13340.1"/>
    <property type="molecule type" value="Genomic_DNA"/>
</dbReference>
<dbReference type="RefSeq" id="WP_011531800.1">
    <property type="nucleotide sequence ID" value="NC_008027.1"/>
</dbReference>
<dbReference type="SMR" id="Q1IG62"/>
<dbReference type="STRING" id="384676.PSEEN0380"/>
<dbReference type="GeneID" id="32803721"/>
<dbReference type="KEGG" id="pen:PSEEN0380"/>
<dbReference type="eggNOG" id="COG0696">
    <property type="taxonomic scope" value="Bacteria"/>
</dbReference>
<dbReference type="HOGENOM" id="CLU_026099_2_0_6"/>
<dbReference type="OrthoDB" id="9800863at2"/>
<dbReference type="UniPathway" id="UPA00109">
    <property type="reaction ID" value="UER00186"/>
</dbReference>
<dbReference type="Proteomes" id="UP000000658">
    <property type="component" value="Chromosome"/>
</dbReference>
<dbReference type="GO" id="GO:0005829">
    <property type="term" value="C:cytosol"/>
    <property type="evidence" value="ECO:0007669"/>
    <property type="project" value="TreeGrafter"/>
</dbReference>
<dbReference type="GO" id="GO:0030145">
    <property type="term" value="F:manganese ion binding"/>
    <property type="evidence" value="ECO:0007669"/>
    <property type="project" value="UniProtKB-UniRule"/>
</dbReference>
<dbReference type="GO" id="GO:0004619">
    <property type="term" value="F:phosphoglycerate mutase activity"/>
    <property type="evidence" value="ECO:0007669"/>
    <property type="project" value="UniProtKB-EC"/>
</dbReference>
<dbReference type="GO" id="GO:0006007">
    <property type="term" value="P:glucose catabolic process"/>
    <property type="evidence" value="ECO:0007669"/>
    <property type="project" value="InterPro"/>
</dbReference>
<dbReference type="GO" id="GO:0006096">
    <property type="term" value="P:glycolytic process"/>
    <property type="evidence" value="ECO:0007669"/>
    <property type="project" value="UniProtKB-UniRule"/>
</dbReference>
<dbReference type="CDD" id="cd16010">
    <property type="entry name" value="iPGM"/>
    <property type="match status" value="1"/>
</dbReference>
<dbReference type="FunFam" id="3.40.1450.10:FF:000001">
    <property type="entry name" value="2,3-bisphosphoglycerate-independent phosphoglycerate mutase"/>
    <property type="match status" value="1"/>
</dbReference>
<dbReference type="FunFam" id="3.40.720.10:FF:000001">
    <property type="entry name" value="2,3-bisphosphoglycerate-independent phosphoglycerate mutase"/>
    <property type="match status" value="1"/>
</dbReference>
<dbReference type="Gene3D" id="3.40.720.10">
    <property type="entry name" value="Alkaline Phosphatase, subunit A"/>
    <property type="match status" value="1"/>
</dbReference>
<dbReference type="Gene3D" id="3.40.1450.10">
    <property type="entry name" value="BPG-independent phosphoglycerate mutase, domain B"/>
    <property type="match status" value="1"/>
</dbReference>
<dbReference type="HAMAP" id="MF_01038">
    <property type="entry name" value="GpmI"/>
    <property type="match status" value="1"/>
</dbReference>
<dbReference type="InterPro" id="IPR017850">
    <property type="entry name" value="Alkaline_phosphatase_core_sf"/>
</dbReference>
<dbReference type="InterPro" id="IPR011258">
    <property type="entry name" value="BPG-indep_PGM_N"/>
</dbReference>
<dbReference type="InterPro" id="IPR006124">
    <property type="entry name" value="Metalloenzyme"/>
</dbReference>
<dbReference type="InterPro" id="IPR036646">
    <property type="entry name" value="PGAM_B_sf"/>
</dbReference>
<dbReference type="InterPro" id="IPR005995">
    <property type="entry name" value="Pgm_bpd_ind"/>
</dbReference>
<dbReference type="NCBIfam" id="TIGR01307">
    <property type="entry name" value="pgm_bpd_ind"/>
    <property type="match status" value="1"/>
</dbReference>
<dbReference type="PANTHER" id="PTHR31637">
    <property type="entry name" value="2,3-BISPHOSPHOGLYCERATE-INDEPENDENT PHOSPHOGLYCERATE MUTASE"/>
    <property type="match status" value="1"/>
</dbReference>
<dbReference type="PANTHER" id="PTHR31637:SF0">
    <property type="entry name" value="2,3-BISPHOSPHOGLYCERATE-INDEPENDENT PHOSPHOGLYCERATE MUTASE"/>
    <property type="match status" value="1"/>
</dbReference>
<dbReference type="Pfam" id="PF06415">
    <property type="entry name" value="iPGM_N"/>
    <property type="match status" value="1"/>
</dbReference>
<dbReference type="Pfam" id="PF01676">
    <property type="entry name" value="Metalloenzyme"/>
    <property type="match status" value="1"/>
</dbReference>
<dbReference type="PIRSF" id="PIRSF001492">
    <property type="entry name" value="IPGAM"/>
    <property type="match status" value="1"/>
</dbReference>
<dbReference type="SUPFAM" id="SSF64158">
    <property type="entry name" value="2,3-Bisphosphoglycerate-independent phosphoglycerate mutase, substrate-binding domain"/>
    <property type="match status" value="1"/>
</dbReference>
<dbReference type="SUPFAM" id="SSF53649">
    <property type="entry name" value="Alkaline phosphatase-like"/>
    <property type="match status" value="1"/>
</dbReference>
<feature type="chain" id="PRO_1000063989" description="2,3-bisphosphoglycerate-independent phosphoglycerate mutase">
    <location>
        <begin position="1"/>
        <end position="511"/>
    </location>
</feature>
<feature type="active site" description="Phosphoserine intermediate" evidence="1">
    <location>
        <position position="64"/>
    </location>
</feature>
<feature type="binding site" evidence="1">
    <location>
        <position position="14"/>
    </location>
    <ligand>
        <name>Mn(2+)</name>
        <dbReference type="ChEBI" id="CHEBI:29035"/>
        <label>2</label>
    </ligand>
</feature>
<feature type="binding site" evidence="1">
    <location>
        <position position="64"/>
    </location>
    <ligand>
        <name>Mn(2+)</name>
        <dbReference type="ChEBI" id="CHEBI:29035"/>
        <label>2</label>
    </ligand>
</feature>
<feature type="binding site" evidence="1">
    <location>
        <position position="125"/>
    </location>
    <ligand>
        <name>substrate</name>
    </ligand>
</feature>
<feature type="binding site" evidence="1">
    <location>
        <begin position="155"/>
        <end position="156"/>
    </location>
    <ligand>
        <name>substrate</name>
    </ligand>
</feature>
<feature type="binding site" evidence="1">
    <location>
        <position position="187"/>
    </location>
    <ligand>
        <name>substrate</name>
    </ligand>
</feature>
<feature type="binding site" evidence="1">
    <location>
        <position position="193"/>
    </location>
    <ligand>
        <name>substrate</name>
    </ligand>
</feature>
<feature type="binding site" evidence="1">
    <location>
        <begin position="259"/>
        <end position="262"/>
    </location>
    <ligand>
        <name>substrate</name>
    </ligand>
</feature>
<feature type="binding site" evidence="1">
    <location>
        <position position="333"/>
    </location>
    <ligand>
        <name>substrate</name>
    </ligand>
</feature>
<feature type="binding site" evidence="1">
    <location>
        <position position="400"/>
    </location>
    <ligand>
        <name>Mn(2+)</name>
        <dbReference type="ChEBI" id="CHEBI:29035"/>
        <label>1</label>
    </ligand>
</feature>
<feature type="binding site" evidence="1">
    <location>
        <position position="404"/>
    </location>
    <ligand>
        <name>Mn(2+)</name>
        <dbReference type="ChEBI" id="CHEBI:29035"/>
        <label>1</label>
    </ligand>
</feature>
<feature type="binding site" evidence="1">
    <location>
        <position position="441"/>
    </location>
    <ligand>
        <name>Mn(2+)</name>
        <dbReference type="ChEBI" id="CHEBI:29035"/>
        <label>2</label>
    </ligand>
</feature>
<feature type="binding site" evidence="1">
    <location>
        <position position="442"/>
    </location>
    <ligand>
        <name>Mn(2+)</name>
        <dbReference type="ChEBI" id="CHEBI:29035"/>
        <label>2</label>
    </ligand>
</feature>
<feature type="binding site" evidence="1">
    <location>
        <position position="460"/>
    </location>
    <ligand>
        <name>Mn(2+)</name>
        <dbReference type="ChEBI" id="CHEBI:29035"/>
        <label>1</label>
    </ligand>
</feature>
<sequence>MTSTPKPLVLIILDGFGHSESPEYNAIFAANTPVYDRLRATQPHGLISGSGMDVGLPDGQMGNSEVGHMNLGAGRVVYQDFTRVTKAIRDGEFFENPVLTGAVDKAASAGKAVHILGLLSDGGVHSHQDHLIAMAELAAQRGAEKIYLHAFLDGRDTPPRSAQSSIELLDATFAKLGKGRIASLIGRYYAMDRDNRWDRVSAAYNLIVDSAAEYTADSALAGLQAAYAREENDEFVKATRIGEAVKVEDGDAVIFMNFRADRARELSRAFVEPDFNEFPRARLPKLAAYIGLTQYSAKIPAPAAFAPSSLDNVLGEYLAKNGKTQLRIAETEKYAHVTFFFSGGREEPFEGEERILIPSPKVATYDLQPEMNAPEVTDRIVEAIEQQRFDVIVVNYANGDMVGHTGVFEAAVKAVEALDSCVGRIVEALGKVGGEALITADHGNVEQMEDECTGQAHTAHTSEPVPFIYVGKRKVTVREGGVLADVAPTMLKLLGLEKPAEMTGTSILVDA</sequence>